<dbReference type="EMBL" id="X56874">
    <property type="protein sequence ID" value="CAA40197.1"/>
    <property type="molecule type" value="mRNA"/>
</dbReference>
<dbReference type="PIR" id="S16575">
    <property type="entry name" value="S16575"/>
</dbReference>
<dbReference type="SMR" id="Q00652"/>
<dbReference type="MEROPS" id="I03.017"/>
<dbReference type="InParanoid" id="Q00652"/>
<dbReference type="Proteomes" id="UP000011115">
    <property type="component" value="Unassembled WGS sequence"/>
</dbReference>
<dbReference type="ExpressionAtlas" id="Q00652">
    <property type="expression patterns" value="differential"/>
</dbReference>
<dbReference type="GO" id="GO:0005773">
    <property type="term" value="C:vacuole"/>
    <property type="evidence" value="ECO:0007669"/>
    <property type="project" value="UniProtKB-SubCell"/>
</dbReference>
<dbReference type="GO" id="GO:0004869">
    <property type="term" value="F:cysteine-type endopeptidase inhibitor activity"/>
    <property type="evidence" value="ECO:0007669"/>
    <property type="project" value="UniProtKB-KW"/>
</dbReference>
<dbReference type="CDD" id="cd23372">
    <property type="entry name" value="beta-trefoil_STI_CPI-like"/>
    <property type="match status" value="1"/>
</dbReference>
<dbReference type="Gene3D" id="2.80.10.50">
    <property type="match status" value="1"/>
</dbReference>
<dbReference type="InterPro" id="IPR011065">
    <property type="entry name" value="Kunitz_inhibitor_STI-like_sf"/>
</dbReference>
<dbReference type="InterPro" id="IPR002160">
    <property type="entry name" value="Prot_inh_Kunz-lg"/>
</dbReference>
<dbReference type="PANTHER" id="PTHR33107:SF44">
    <property type="entry name" value="CYSTEINE PROTEASE INHIBITOR 1"/>
    <property type="match status" value="1"/>
</dbReference>
<dbReference type="PANTHER" id="PTHR33107">
    <property type="entry name" value="KUNITZ TRYPSIN INHIBITOR 2"/>
    <property type="match status" value="1"/>
</dbReference>
<dbReference type="Pfam" id="PF00197">
    <property type="entry name" value="Kunitz_legume"/>
    <property type="match status" value="1"/>
</dbReference>
<dbReference type="SMART" id="SM00452">
    <property type="entry name" value="STI"/>
    <property type="match status" value="1"/>
</dbReference>
<dbReference type="SUPFAM" id="SSF50386">
    <property type="entry name" value="STI-like"/>
    <property type="match status" value="1"/>
</dbReference>
<dbReference type="PROSITE" id="PS00283">
    <property type="entry name" value="SOYBEAN_KUNITZ"/>
    <property type="match status" value="1"/>
</dbReference>
<sequence>MKSINILSFLLLSSTLSLVAFARSFSSENPIVLPSTCHDDDNLVLPEVYDQDGHPLRIGQRYIINNPLIGAGAVYLYNIGNLQCPNAVLQHMSIPQFLGEGTPVVFVRKSESDYGDVVRVMTGVYIKFFVKTTKLCVDQTVWKVNHEGLVVTGGQVGNENDIFKIRKTDLVTPEGSKFVYKLLHCPSHLQCKNIGGNFKNGYPRLVTVDDDKDFLPFVFIKA</sequence>
<protein>
    <recommendedName>
        <fullName>Cysteine protease inhibitor 9</fullName>
    </recommendedName>
    <alternativeName>
        <fullName>PKIX</fullName>
    </alternativeName>
    <alternativeName>
        <fullName>pT1</fullName>
    </alternativeName>
</protein>
<name>CPI9_SOLTU</name>
<comment type="function">
    <text>Putative inhibitor of cysteine proteases. Does not inhibit papain. May protect the plant by inhibiting proteases of invading organisms.</text>
</comment>
<comment type="subcellular location">
    <subcellularLocation>
        <location evidence="1">Vacuole</location>
    </subcellularLocation>
</comment>
<comment type="tissue specificity">
    <text>Tuber.</text>
</comment>
<comment type="similarity">
    <text evidence="2">Belongs to the protease inhibitor I3 (leguminous Kunitz-type inhibitor) family.</text>
</comment>
<comment type="caution">
    <text evidence="2">PubMed:1863783 postulates an inhibition of trypsin but the sequence homology points to a cysteine protease inhibitor.</text>
</comment>
<proteinExistence type="evidence at transcript level"/>
<accession>Q00652</accession>
<reference key="1">
    <citation type="journal article" date="1991" name="Plant Mol. Biol.">
        <title>Nucleotide sequence of a cDNA encoding the putative trypsin inhibitor in potato tuber.</title>
        <authorList>
            <person name="Yamagishi K."/>
            <person name="Mitsumori C."/>
            <person name="Kikuta Y."/>
        </authorList>
    </citation>
    <scope>NUCLEOTIDE SEQUENCE [MRNA]</scope>
    <source>
        <strain>cv. Irish Cobbler</strain>
        <tissue>Tuber</tissue>
    </source>
</reference>
<organism>
    <name type="scientific">Solanum tuberosum</name>
    <name type="common">Potato</name>
    <dbReference type="NCBI Taxonomy" id="4113"/>
    <lineage>
        <taxon>Eukaryota</taxon>
        <taxon>Viridiplantae</taxon>
        <taxon>Streptophyta</taxon>
        <taxon>Embryophyta</taxon>
        <taxon>Tracheophyta</taxon>
        <taxon>Spermatophyta</taxon>
        <taxon>Magnoliopsida</taxon>
        <taxon>eudicotyledons</taxon>
        <taxon>Gunneridae</taxon>
        <taxon>Pentapetalae</taxon>
        <taxon>asterids</taxon>
        <taxon>lamiids</taxon>
        <taxon>Solanales</taxon>
        <taxon>Solanaceae</taxon>
        <taxon>Solanoideae</taxon>
        <taxon>Solaneae</taxon>
        <taxon>Solanum</taxon>
    </lineage>
</organism>
<feature type="signal peptide" evidence="1">
    <location>
        <begin position="1"/>
        <end position="26"/>
    </location>
</feature>
<feature type="propeptide" id="PRO_0000016928" evidence="1">
    <location>
        <begin position="27"/>
        <end position="42"/>
    </location>
</feature>
<feature type="chain" id="PRO_0000016929" description="Cysteine protease inhibitor 9">
    <location>
        <begin position="43"/>
        <end position="222"/>
    </location>
</feature>
<feature type="short sequence motif" description="Vacuolar targeting signal" evidence="1">
    <location>
        <begin position="29"/>
        <end position="34"/>
    </location>
</feature>
<feature type="disulfide bond" evidence="1">
    <location>
        <begin position="84"/>
        <end position="136"/>
    </location>
</feature>
<feature type="disulfide bond" evidence="1">
    <location>
        <begin position="185"/>
        <end position="191"/>
    </location>
</feature>
<evidence type="ECO:0000250" key="1"/>
<evidence type="ECO:0000305" key="2"/>
<keyword id="KW-1015">Disulfide bond</keyword>
<keyword id="KW-0646">Protease inhibitor</keyword>
<keyword id="KW-1185">Reference proteome</keyword>
<keyword id="KW-0732">Signal</keyword>
<keyword id="KW-0789">Thiol protease inhibitor</keyword>
<keyword id="KW-0926">Vacuole</keyword>